<protein>
    <recommendedName>
        <fullName>Transmembrane protein 47</fullName>
    </recommendedName>
    <alternativeName>
        <fullName>Transmembrane 4 superfamily member 10</fullName>
    </alternativeName>
</protein>
<proteinExistence type="evidence at protein level"/>
<organism>
    <name type="scientific">Mus musculus</name>
    <name type="common">Mouse</name>
    <dbReference type="NCBI Taxonomy" id="10090"/>
    <lineage>
        <taxon>Eukaryota</taxon>
        <taxon>Metazoa</taxon>
        <taxon>Chordata</taxon>
        <taxon>Craniata</taxon>
        <taxon>Vertebrata</taxon>
        <taxon>Euteleostomi</taxon>
        <taxon>Mammalia</taxon>
        <taxon>Eutheria</taxon>
        <taxon>Euarchontoglires</taxon>
        <taxon>Glires</taxon>
        <taxon>Rodentia</taxon>
        <taxon>Myomorpha</taxon>
        <taxon>Muroidea</taxon>
        <taxon>Muridae</taxon>
        <taxon>Murinae</taxon>
        <taxon>Mus</taxon>
        <taxon>Mus</taxon>
    </lineage>
</organism>
<dbReference type="EMBL" id="AB041540">
    <property type="protein sequence ID" value="BAA95025.1"/>
    <property type="molecule type" value="mRNA"/>
</dbReference>
<dbReference type="EMBL" id="AK030761">
    <property type="protein sequence ID" value="BAC27126.1"/>
    <property type="molecule type" value="mRNA"/>
</dbReference>
<dbReference type="EMBL" id="AK031346">
    <property type="protein sequence ID" value="BAC27357.1"/>
    <property type="molecule type" value="mRNA"/>
</dbReference>
<dbReference type="EMBL" id="AK076147">
    <property type="protein sequence ID" value="BAC36217.1"/>
    <property type="molecule type" value="mRNA"/>
</dbReference>
<dbReference type="EMBL" id="AK133790">
    <property type="protein sequence ID" value="BAE21843.1"/>
    <property type="status" value="ALT_FRAME"/>
    <property type="molecule type" value="mRNA"/>
</dbReference>
<dbReference type="EMBL" id="AK162304">
    <property type="protein sequence ID" value="BAE36842.1"/>
    <property type="molecule type" value="mRNA"/>
</dbReference>
<dbReference type="EMBL" id="AL671873">
    <property type="status" value="NOT_ANNOTATED_CDS"/>
    <property type="molecule type" value="Genomic_DNA"/>
</dbReference>
<dbReference type="EMBL" id="BC019751">
    <property type="protein sequence ID" value="AAH19751.1"/>
    <property type="molecule type" value="mRNA"/>
</dbReference>
<dbReference type="CCDS" id="CCDS30254.1">
    <molecule id="Q9JJG6-1"/>
</dbReference>
<dbReference type="RefSeq" id="NP_620090.1">
    <molecule id="Q9JJG6-1"/>
    <property type="nucleotide sequence ID" value="NM_138751.2"/>
</dbReference>
<dbReference type="SMR" id="Q9JJG6"/>
<dbReference type="FunCoup" id="Q9JJG6">
    <property type="interactions" value="440"/>
</dbReference>
<dbReference type="IntAct" id="Q9JJG6">
    <property type="interactions" value="3"/>
</dbReference>
<dbReference type="STRING" id="10090.ENSMUSP00000026760"/>
<dbReference type="iPTMnet" id="Q9JJG6"/>
<dbReference type="PhosphoSitePlus" id="Q9JJG6"/>
<dbReference type="SwissPalm" id="Q9JJG6"/>
<dbReference type="PaxDb" id="10090-ENSMUSP00000026760"/>
<dbReference type="ProteomicsDB" id="259584">
    <molecule id="Q9JJG6-1"/>
</dbReference>
<dbReference type="ProteomicsDB" id="259585">
    <molecule id="Q9JJG6-2"/>
</dbReference>
<dbReference type="Pumba" id="Q9JJG6"/>
<dbReference type="Antibodypedia" id="71106">
    <property type="antibodies" value="31 antibodies from 8 providers"/>
</dbReference>
<dbReference type="DNASU" id="192216"/>
<dbReference type="Ensembl" id="ENSMUST00000026760.3">
    <molecule id="Q9JJG6-1"/>
    <property type="protein sequence ID" value="ENSMUSP00000026760.3"/>
    <property type="gene ID" value="ENSMUSG00000025666.17"/>
</dbReference>
<dbReference type="Ensembl" id="ENSMUST00000171953.8">
    <molecule id="Q9JJG6-1"/>
    <property type="protein sequence ID" value="ENSMUSP00000129793.2"/>
    <property type="gene ID" value="ENSMUSG00000025666.17"/>
</dbReference>
<dbReference type="GeneID" id="192216"/>
<dbReference type="KEGG" id="mmu:192216"/>
<dbReference type="UCSC" id="uc009tre.2">
    <molecule id="Q9JJG6-1"/>
    <property type="organism name" value="mouse"/>
</dbReference>
<dbReference type="AGR" id="MGI:2177570"/>
<dbReference type="CTD" id="83604"/>
<dbReference type="MGI" id="MGI:2177570">
    <property type="gene designation" value="Tmem47"/>
</dbReference>
<dbReference type="VEuPathDB" id="HostDB:ENSMUSG00000025666"/>
<dbReference type="eggNOG" id="KOG4671">
    <property type="taxonomic scope" value="Eukaryota"/>
</dbReference>
<dbReference type="GeneTree" id="ENSGT00530000063484"/>
<dbReference type="HOGENOM" id="CLU_120054_1_0_1"/>
<dbReference type="InParanoid" id="Q9JJG6"/>
<dbReference type="OMA" id="FVETATM"/>
<dbReference type="OrthoDB" id="8655982at2759"/>
<dbReference type="PhylomeDB" id="Q9JJG6"/>
<dbReference type="TreeFam" id="TF312855"/>
<dbReference type="BioGRID-ORCS" id="192216">
    <property type="hits" value="1 hit in 76 CRISPR screens"/>
</dbReference>
<dbReference type="PRO" id="PR:Q9JJG6"/>
<dbReference type="Proteomes" id="UP000000589">
    <property type="component" value="Chromosome X"/>
</dbReference>
<dbReference type="RNAct" id="Q9JJG6">
    <property type="molecule type" value="protein"/>
</dbReference>
<dbReference type="Bgee" id="ENSMUSG00000025666">
    <property type="expression patterns" value="Expressed in median eminence of neurohypophysis and 251 other cell types or tissues"/>
</dbReference>
<dbReference type="GO" id="GO:0005912">
    <property type="term" value="C:adherens junction"/>
    <property type="evidence" value="ECO:0007669"/>
    <property type="project" value="UniProtKB-SubCell"/>
</dbReference>
<dbReference type="GO" id="GO:0005911">
    <property type="term" value="C:cell-cell junction"/>
    <property type="evidence" value="ECO:0000314"/>
    <property type="project" value="MGI"/>
</dbReference>
<dbReference type="GO" id="GO:0005886">
    <property type="term" value="C:plasma membrane"/>
    <property type="evidence" value="ECO:0007669"/>
    <property type="project" value="Ensembl"/>
</dbReference>
<dbReference type="FunFam" id="1.20.140.150:FF:000010">
    <property type="entry name" value="transmembrane protein 47"/>
    <property type="match status" value="1"/>
</dbReference>
<dbReference type="Gene3D" id="1.20.140.150">
    <property type="match status" value="1"/>
</dbReference>
<dbReference type="InterPro" id="IPR015664">
    <property type="entry name" value="P53_induced"/>
</dbReference>
<dbReference type="InterPro" id="IPR004031">
    <property type="entry name" value="PMP22/EMP/MP20/Claudin"/>
</dbReference>
<dbReference type="PANTHER" id="PTHR14399">
    <property type="entry name" value="P53-INDUCED PROTEIN RELATED"/>
    <property type="match status" value="1"/>
</dbReference>
<dbReference type="PANTHER" id="PTHR14399:SF3">
    <property type="entry name" value="TRANSMEMBRANE PROTEIN 47"/>
    <property type="match status" value="1"/>
</dbReference>
<dbReference type="Pfam" id="PF00822">
    <property type="entry name" value="PMP22_Claudin"/>
    <property type="match status" value="1"/>
</dbReference>
<comment type="function">
    <text evidence="5 6">Regulates cell junction organization in epithelial cells. May play a role in the transition from adherens junction to tight junction assembly. May regulate F-actin polymerization required for tight junctional localization dynamics and affect the junctional localization of PARD6B (PubMed:26990309). During podocyte differentiation may negatively regulate activity of FYN and subsequently the abundance of nephrin (PubMed:21881001).</text>
</comment>
<comment type="subunit">
    <text evidence="2 5">Interacts with CTNNB1, CTNNA1, PRKCI, PARD6B (By similarity). Interacts with FYB1.</text>
</comment>
<comment type="interaction">
    <interactant intactId="EBI-11685657">
        <id>Q9JJG6</id>
    </interactant>
    <interactant intactId="EBI-7353747">
        <id>O35601</id>
        <label>Fyb1</label>
    </interactant>
    <organismsDiffer>false</organismsDiffer>
    <experiments>4</experiments>
</comment>
<comment type="subcellular location">
    <subcellularLocation>
        <location evidence="8">Membrane</location>
        <topology evidence="8">Multi-pass membrane protein</topology>
    </subcellularLocation>
    <subcellularLocation>
        <location evidence="4 6">Cell junction</location>
    </subcellularLocation>
    <subcellularLocation>
        <location evidence="2">Cell junction</location>
        <location evidence="2">Adherens junction</location>
    </subcellularLocation>
    <text evidence="4 5">In undifferentiated cultured podocytes localizes to the perinuclear region and translocates to the cell membrane after Cadherin appearance at cell-cell contacts. Upon differentiation of cultured podocytes, protein disappears from cell contacts and expression ceases. Re-expressed upon induced podocyte injury. Colocalizes with FYB1 at cell-cell contacts in podocytes.</text>
</comment>
<comment type="alternative products">
    <event type="alternative splicing"/>
    <isoform>
        <id>Q9JJG6-1</id>
        <name>1</name>
        <sequence type="displayed"/>
    </isoform>
    <isoform>
        <id>Q9JJG6-2</id>
        <name>2</name>
        <sequence type="described" ref="VSP_034861"/>
    </isoform>
</comment>
<comment type="tissue specificity">
    <text evidence="5">Expressed in podocytes (at protein level).</text>
</comment>
<comment type="developmental stage">
    <text evidence="4">Expression in kidney peaks at postnatal day 4 and declines to undetectable levels by day 15. In adults very low expression detected in the basal region of lateral membranes of few tubule segments (at protein level).</text>
</comment>
<comment type="similarity">
    <text evidence="8">Belongs to the TMEM47 family.</text>
</comment>
<comment type="sequence caution" evidence="8">
    <conflict type="frameshift">
        <sequence resource="EMBL-CDS" id="BAE21843"/>
    </conflict>
</comment>
<sequence length="181" mass="19995">MASAGSGMEEVRVSVLTPLKLVGLVCIFLALCLDLGAVLSPAWVTADHQYYLSLWESCRKPANLDIWHCESTLGSDWQIATLALLLGGAAIILIAFLVGLISICVGSRRRFYRPVAVMLFAAVVLQVCSLVLYPIKFIETVSLKIYHEFNWGYGLAWGATIFSFGGAILYCLNPKNYEDYY</sequence>
<evidence type="ECO:0000250" key="1">
    <source>
        <dbReference type="UniProtKB" id="Q9BQJ4"/>
    </source>
</evidence>
<evidence type="ECO:0000250" key="2">
    <source>
        <dbReference type="UniProtKB" id="Q9XSV3"/>
    </source>
</evidence>
<evidence type="ECO:0000255" key="3"/>
<evidence type="ECO:0000269" key="4">
    <source>
    </source>
</evidence>
<evidence type="ECO:0000269" key="5">
    <source>
    </source>
</evidence>
<evidence type="ECO:0000269" key="6">
    <source>
    </source>
</evidence>
<evidence type="ECO:0000303" key="7">
    <source>
    </source>
</evidence>
<evidence type="ECO:0000305" key="8"/>
<feature type="initiator methionine" description="Removed" evidence="1">
    <location>
        <position position="1"/>
    </location>
</feature>
<feature type="chain" id="PRO_0000072574" description="Transmembrane protein 47">
    <location>
        <begin position="2"/>
        <end position="181"/>
    </location>
</feature>
<feature type="transmembrane region" description="Helical" evidence="3">
    <location>
        <begin position="21"/>
        <end position="41"/>
    </location>
</feature>
<feature type="transmembrane region" description="Helical" evidence="3">
    <location>
        <begin position="83"/>
        <end position="103"/>
    </location>
</feature>
<feature type="transmembrane region" description="Helical" evidence="3">
    <location>
        <begin position="115"/>
        <end position="135"/>
    </location>
</feature>
<feature type="transmembrane region" description="Helical" evidence="3">
    <location>
        <begin position="152"/>
        <end position="172"/>
    </location>
</feature>
<feature type="modified residue" description="N-acetylalanine" evidence="1">
    <location>
        <position position="2"/>
    </location>
</feature>
<feature type="splice variant" id="VSP_034861" description="In isoform 2." evidence="7">
    <original>DWQIATLALLLGGAAIILIAFLVGLISICVGSRRRFYRPVAVMLFAAVVLQVCSLVLYPIKFIETVSLKIYHEFNWGYGLAWGATIFSFGGAILYCLNPKNYEDYY</original>
    <variation>GERPHPTSGAAPLAPAWPSWAPPLPPPLWEPPPPLSFAPLPASLPYLLGPWTPGPSCMCPSLEGVRVGKTPETSYALYSSLAHPSSFGVTRLLFWAIVIIEGENHVAV</variation>
    <location>
        <begin position="76"/>
        <end position="181"/>
    </location>
</feature>
<accession>Q9JJG6</accession>
<accession>B1AUN5</accession>
<accession>Q3TS34</accession>
<accession>Q3UZL4</accession>
<accession>Q8C0H5</accession>
<keyword id="KW-0007">Acetylation</keyword>
<keyword id="KW-0025">Alternative splicing</keyword>
<keyword id="KW-0965">Cell junction</keyword>
<keyword id="KW-0472">Membrane</keyword>
<keyword id="KW-1185">Reference proteome</keyword>
<keyword id="KW-0812">Transmembrane</keyword>
<keyword id="KW-1133">Transmembrane helix</keyword>
<name>TMM47_MOUSE</name>
<reference key="1">
    <citation type="submission" date="2000-04" db="EMBL/GenBank/DDBJ databases">
        <title>Isolation of full-length cDNA clones from mouse brain cDNA library made by oligo-capping method.</title>
        <authorList>
            <person name="Osada N."/>
            <person name="Kusuda J."/>
            <person name="Tanuma R."/>
            <person name="Ito A."/>
            <person name="Hirata M."/>
            <person name="Sugano S."/>
            <person name="Hashimoto K."/>
        </authorList>
    </citation>
    <scope>NUCLEOTIDE SEQUENCE [LARGE SCALE MRNA]</scope>
    <source>
        <strain>C57BL/6J</strain>
        <tissue>Brain</tissue>
    </source>
</reference>
<reference key="2">
    <citation type="journal article" date="2005" name="Science">
        <title>The transcriptional landscape of the mammalian genome.</title>
        <authorList>
            <person name="Carninci P."/>
            <person name="Kasukawa T."/>
            <person name="Katayama S."/>
            <person name="Gough J."/>
            <person name="Frith M.C."/>
            <person name="Maeda N."/>
            <person name="Oyama R."/>
            <person name="Ravasi T."/>
            <person name="Lenhard B."/>
            <person name="Wells C."/>
            <person name="Kodzius R."/>
            <person name="Shimokawa K."/>
            <person name="Bajic V.B."/>
            <person name="Brenner S.E."/>
            <person name="Batalov S."/>
            <person name="Forrest A.R."/>
            <person name="Zavolan M."/>
            <person name="Davis M.J."/>
            <person name="Wilming L.G."/>
            <person name="Aidinis V."/>
            <person name="Allen J.E."/>
            <person name="Ambesi-Impiombato A."/>
            <person name="Apweiler R."/>
            <person name="Aturaliya R.N."/>
            <person name="Bailey T.L."/>
            <person name="Bansal M."/>
            <person name="Baxter L."/>
            <person name="Beisel K.W."/>
            <person name="Bersano T."/>
            <person name="Bono H."/>
            <person name="Chalk A.M."/>
            <person name="Chiu K.P."/>
            <person name="Choudhary V."/>
            <person name="Christoffels A."/>
            <person name="Clutterbuck D.R."/>
            <person name="Crowe M.L."/>
            <person name="Dalla E."/>
            <person name="Dalrymple B.P."/>
            <person name="de Bono B."/>
            <person name="Della Gatta G."/>
            <person name="di Bernardo D."/>
            <person name="Down T."/>
            <person name="Engstrom P."/>
            <person name="Fagiolini M."/>
            <person name="Faulkner G."/>
            <person name="Fletcher C.F."/>
            <person name="Fukushima T."/>
            <person name="Furuno M."/>
            <person name="Futaki S."/>
            <person name="Gariboldi M."/>
            <person name="Georgii-Hemming P."/>
            <person name="Gingeras T.R."/>
            <person name="Gojobori T."/>
            <person name="Green R.E."/>
            <person name="Gustincich S."/>
            <person name="Harbers M."/>
            <person name="Hayashi Y."/>
            <person name="Hensch T.K."/>
            <person name="Hirokawa N."/>
            <person name="Hill D."/>
            <person name="Huminiecki L."/>
            <person name="Iacono M."/>
            <person name="Ikeo K."/>
            <person name="Iwama A."/>
            <person name="Ishikawa T."/>
            <person name="Jakt M."/>
            <person name="Kanapin A."/>
            <person name="Katoh M."/>
            <person name="Kawasawa Y."/>
            <person name="Kelso J."/>
            <person name="Kitamura H."/>
            <person name="Kitano H."/>
            <person name="Kollias G."/>
            <person name="Krishnan S.P."/>
            <person name="Kruger A."/>
            <person name="Kummerfeld S.K."/>
            <person name="Kurochkin I.V."/>
            <person name="Lareau L.F."/>
            <person name="Lazarevic D."/>
            <person name="Lipovich L."/>
            <person name="Liu J."/>
            <person name="Liuni S."/>
            <person name="McWilliam S."/>
            <person name="Madan Babu M."/>
            <person name="Madera M."/>
            <person name="Marchionni L."/>
            <person name="Matsuda H."/>
            <person name="Matsuzawa S."/>
            <person name="Miki H."/>
            <person name="Mignone F."/>
            <person name="Miyake S."/>
            <person name="Morris K."/>
            <person name="Mottagui-Tabar S."/>
            <person name="Mulder N."/>
            <person name="Nakano N."/>
            <person name="Nakauchi H."/>
            <person name="Ng P."/>
            <person name="Nilsson R."/>
            <person name="Nishiguchi S."/>
            <person name="Nishikawa S."/>
            <person name="Nori F."/>
            <person name="Ohara O."/>
            <person name="Okazaki Y."/>
            <person name="Orlando V."/>
            <person name="Pang K.C."/>
            <person name="Pavan W.J."/>
            <person name="Pavesi G."/>
            <person name="Pesole G."/>
            <person name="Petrovsky N."/>
            <person name="Piazza S."/>
            <person name="Reed J."/>
            <person name="Reid J.F."/>
            <person name="Ring B.Z."/>
            <person name="Ringwald M."/>
            <person name="Rost B."/>
            <person name="Ruan Y."/>
            <person name="Salzberg S.L."/>
            <person name="Sandelin A."/>
            <person name="Schneider C."/>
            <person name="Schoenbach C."/>
            <person name="Sekiguchi K."/>
            <person name="Semple C.A."/>
            <person name="Seno S."/>
            <person name="Sessa L."/>
            <person name="Sheng Y."/>
            <person name="Shibata Y."/>
            <person name="Shimada H."/>
            <person name="Shimada K."/>
            <person name="Silva D."/>
            <person name="Sinclair B."/>
            <person name="Sperling S."/>
            <person name="Stupka E."/>
            <person name="Sugiura K."/>
            <person name="Sultana R."/>
            <person name="Takenaka Y."/>
            <person name="Taki K."/>
            <person name="Tammoja K."/>
            <person name="Tan S.L."/>
            <person name="Tang S."/>
            <person name="Taylor M.S."/>
            <person name="Tegner J."/>
            <person name="Teichmann S.A."/>
            <person name="Ueda H.R."/>
            <person name="van Nimwegen E."/>
            <person name="Verardo R."/>
            <person name="Wei C.L."/>
            <person name="Yagi K."/>
            <person name="Yamanishi H."/>
            <person name="Zabarovsky E."/>
            <person name="Zhu S."/>
            <person name="Zimmer A."/>
            <person name="Hide W."/>
            <person name="Bult C."/>
            <person name="Grimmond S.M."/>
            <person name="Teasdale R.D."/>
            <person name="Liu E.T."/>
            <person name="Brusic V."/>
            <person name="Quackenbush J."/>
            <person name="Wahlestedt C."/>
            <person name="Mattick J.S."/>
            <person name="Hume D.A."/>
            <person name="Kai C."/>
            <person name="Sasaki D."/>
            <person name="Tomaru Y."/>
            <person name="Fukuda S."/>
            <person name="Kanamori-Katayama M."/>
            <person name="Suzuki M."/>
            <person name="Aoki J."/>
            <person name="Arakawa T."/>
            <person name="Iida J."/>
            <person name="Imamura K."/>
            <person name="Itoh M."/>
            <person name="Kato T."/>
            <person name="Kawaji H."/>
            <person name="Kawagashira N."/>
            <person name="Kawashima T."/>
            <person name="Kojima M."/>
            <person name="Kondo S."/>
            <person name="Konno H."/>
            <person name="Nakano K."/>
            <person name="Ninomiya N."/>
            <person name="Nishio T."/>
            <person name="Okada M."/>
            <person name="Plessy C."/>
            <person name="Shibata K."/>
            <person name="Shiraki T."/>
            <person name="Suzuki S."/>
            <person name="Tagami M."/>
            <person name="Waki K."/>
            <person name="Watahiki A."/>
            <person name="Okamura-Oho Y."/>
            <person name="Suzuki H."/>
            <person name="Kawai J."/>
            <person name="Hayashizaki Y."/>
        </authorList>
    </citation>
    <scope>NUCLEOTIDE SEQUENCE [LARGE SCALE MRNA] (ISOFORMS 1 AND 2)</scope>
    <source>
        <strain>C57BL/6J</strain>
        <tissue>Colon</tissue>
        <tissue>Head</tissue>
        <tissue>Testis</tissue>
    </source>
</reference>
<reference key="3">
    <citation type="journal article" date="2009" name="PLoS Biol.">
        <title>Lineage-specific biology revealed by a finished genome assembly of the mouse.</title>
        <authorList>
            <person name="Church D.M."/>
            <person name="Goodstadt L."/>
            <person name="Hillier L.W."/>
            <person name="Zody M.C."/>
            <person name="Goldstein S."/>
            <person name="She X."/>
            <person name="Bult C.J."/>
            <person name="Agarwala R."/>
            <person name="Cherry J.L."/>
            <person name="DiCuccio M."/>
            <person name="Hlavina W."/>
            <person name="Kapustin Y."/>
            <person name="Meric P."/>
            <person name="Maglott D."/>
            <person name="Birtle Z."/>
            <person name="Marques A.C."/>
            <person name="Graves T."/>
            <person name="Zhou S."/>
            <person name="Teague B."/>
            <person name="Potamousis K."/>
            <person name="Churas C."/>
            <person name="Place M."/>
            <person name="Herschleb J."/>
            <person name="Runnheim R."/>
            <person name="Forrest D."/>
            <person name="Amos-Landgraf J."/>
            <person name="Schwartz D.C."/>
            <person name="Cheng Z."/>
            <person name="Lindblad-Toh K."/>
            <person name="Eichler E.E."/>
            <person name="Ponting C.P."/>
        </authorList>
    </citation>
    <scope>NUCLEOTIDE SEQUENCE [LARGE SCALE GENOMIC DNA]</scope>
    <source>
        <strain>C57BL/6J</strain>
    </source>
</reference>
<reference key="4">
    <citation type="journal article" date="2004" name="Genome Res.">
        <title>The status, quality, and expansion of the NIH full-length cDNA project: the Mammalian Gene Collection (MGC).</title>
        <authorList>
            <consortium name="The MGC Project Team"/>
        </authorList>
    </citation>
    <scope>NUCLEOTIDE SEQUENCE [LARGE SCALE MRNA]</scope>
    <source>
        <strain>Czech II</strain>
        <tissue>Mammary tumor</tissue>
    </source>
</reference>
<reference key="5">
    <citation type="journal article" date="2007" name="Dev. Dyn.">
        <title>Expression of TM4SF10, a Claudin/EMP/PMP22 family cell junction protein, during mouse kidney development and podocyte differentiation.</title>
        <authorList>
            <person name="Bruggeman L.A."/>
            <person name="Martinka S."/>
            <person name="Simske J.S."/>
        </authorList>
    </citation>
    <scope>SUBCELLULAR LOCATION</scope>
    <scope>DEVELOPMENTAL STAGE</scope>
</reference>
<reference key="6">
    <citation type="journal article" date="2011" name="Am. J. Physiol.">
        <title>TM4SF10 and ADAP interaction in podocytes: role in Fyn activity and nephrin phosphorylation.</title>
        <authorList>
            <person name="Azhibekov T.A."/>
            <person name="Wu Z."/>
            <person name="Padiyar A."/>
            <person name="Bruggeman L.A."/>
            <person name="Simske J.S."/>
        </authorList>
    </citation>
    <scope>FUNCTION</scope>
    <scope>INTERACTION WITH FYB1</scope>
    <scope>SUBCELLULAR LOCATION</scope>
    <scope>TISSUE SPECIFICITY</scope>
</reference>
<reference key="7">
    <citation type="journal article" date="2016" name="Dev. Dyn.">
        <title>The vertebrate claudin/PMP22/EMP22/MP20 family protein TMEM47 regulates epithelial cell junction maturation and morphogenesis.</title>
        <authorList>
            <person name="Dong Y."/>
            <person name="Simske J.S."/>
        </authorList>
    </citation>
    <scope>FUNCTION</scope>
    <scope>SUBCELLULAR LOCATION</scope>
</reference>
<gene>
    <name type="primary">Tmem47</name>
    <name type="synonym">Tm4sf10</name>
    <name type="ORF">MNCb-0941</name>
</gene>